<name>F161_CAEEL</name>
<comment type="interaction">
    <interactant intactId="EBI-330289">
        <id>Q9XX47</id>
    </interactant>
    <interactant intactId="EBI-311986">
        <id>G5EGG0</id>
        <label>uso-1</label>
    </interactant>
    <organismsDiffer>false</organismsDiffer>
    <experiments>3</experiments>
</comment>
<comment type="subcellular location">
    <subcellularLocation>
        <location evidence="3">Cell projection</location>
        <location evidence="3">Cilium</location>
    </subcellularLocation>
    <subcellularLocation>
        <location evidence="3">Cytoplasm</location>
        <location evidence="3">Cytoskeleton</location>
        <location evidence="3">Cilium axoneme</location>
    </subcellularLocation>
    <text evidence="3">Localizes to the base of the cilium and also to the proximal part of the ciliary axoneme, including the transition zone.</text>
</comment>
<comment type="tissue specificity">
    <text evidence="3">Expressed in amphid and phasmid ciliated neurons.</text>
</comment>
<comment type="similarity">
    <text evidence="5">Belongs to the FAM161 family.</text>
</comment>
<gene>
    <name evidence="7" type="primary">famh-161</name>
    <name evidence="4" type="synonym">fam-161</name>
    <name evidence="7" type="ORF">Y38H6C.14</name>
</gene>
<keyword id="KW-0966">Cell projection</keyword>
<keyword id="KW-0969">Cilium</keyword>
<keyword id="KW-0175">Coiled coil</keyword>
<keyword id="KW-0963">Cytoplasm</keyword>
<keyword id="KW-0206">Cytoskeleton</keyword>
<keyword id="KW-1185">Reference proteome</keyword>
<feature type="chain" id="PRO_0000439083" description="Protein fam-161" evidence="5">
    <location>
        <begin position="1"/>
        <end position="814"/>
    </location>
</feature>
<feature type="region of interest" description="Disordered" evidence="2">
    <location>
        <begin position="71"/>
        <end position="130"/>
    </location>
</feature>
<feature type="region of interest" description="Disordered" evidence="2">
    <location>
        <begin position="150"/>
        <end position="255"/>
    </location>
</feature>
<feature type="region of interest" description="Disordered" evidence="2">
    <location>
        <begin position="569"/>
        <end position="610"/>
    </location>
</feature>
<feature type="region of interest" description="Disordered" evidence="2">
    <location>
        <begin position="714"/>
        <end position="814"/>
    </location>
</feature>
<feature type="coiled-coil region" evidence="1">
    <location>
        <begin position="606"/>
        <end position="689"/>
    </location>
</feature>
<feature type="compositionally biased region" description="Polar residues" evidence="2">
    <location>
        <begin position="71"/>
        <end position="87"/>
    </location>
</feature>
<feature type="compositionally biased region" description="Basic and acidic residues" evidence="2">
    <location>
        <begin position="99"/>
        <end position="111"/>
    </location>
</feature>
<feature type="compositionally biased region" description="Low complexity" evidence="2">
    <location>
        <begin position="174"/>
        <end position="193"/>
    </location>
</feature>
<feature type="compositionally biased region" description="Polar residues" evidence="2">
    <location>
        <begin position="194"/>
        <end position="207"/>
    </location>
</feature>
<feature type="compositionally biased region" description="Polar residues" evidence="2">
    <location>
        <begin position="216"/>
        <end position="235"/>
    </location>
</feature>
<feature type="compositionally biased region" description="Basic residues" evidence="2">
    <location>
        <begin position="236"/>
        <end position="249"/>
    </location>
</feature>
<feature type="compositionally biased region" description="Polar residues" evidence="2">
    <location>
        <begin position="570"/>
        <end position="583"/>
    </location>
</feature>
<feature type="compositionally biased region" description="Polar residues" evidence="2">
    <location>
        <begin position="594"/>
        <end position="610"/>
    </location>
</feature>
<feature type="compositionally biased region" description="Basic and acidic residues" evidence="2">
    <location>
        <begin position="714"/>
        <end position="727"/>
    </location>
</feature>
<feature type="compositionally biased region" description="Polar residues" evidence="2">
    <location>
        <begin position="728"/>
        <end position="745"/>
    </location>
</feature>
<feature type="compositionally biased region" description="Basic and acidic residues" evidence="2">
    <location>
        <begin position="751"/>
        <end position="765"/>
    </location>
</feature>
<feature type="compositionally biased region" description="Low complexity" evidence="2">
    <location>
        <begin position="766"/>
        <end position="779"/>
    </location>
</feature>
<feature type="compositionally biased region" description="Low complexity" evidence="2">
    <location>
        <begin position="795"/>
        <end position="814"/>
    </location>
</feature>
<dbReference type="EMBL" id="BX284605">
    <property type="protein sequence ID" value="CAA20992.1"/>
    <property type="molecule type" value="Genomic_DNA"/>
</dbReference>
<dbReference type="PIR" id="T26702">
    <property type="entry name" value="T26702"/>
</dbReference>
<dbReference type="RefSeq" id="NP_507957.1">
    <property type="nucleotide sequence ID" value="NM_075556.6"/>
</dbReference>
<dbReference type="SMR" id="Q9XX47"/>
<dbReference type="DIP" id="DIP-26699N"/>
<dbReference type="FunCoup" id="Q9XX47">
    <property type="interactions" value="83"/>
</dbReference>
<dbReference type="IntAct" id="Q9XX47">
    <property type="interactions" value="6"/>
</dbReference>
<dbReference type="STRING" id="6239.Y38H6C.14.1"/>
<dbReference type="PaxDb" id="6239-Y38H6C.14"/>
<dbReference type="EnsemblMetazoa" id="Y38H6C.14.1">
    <property type="protein sequence ID" value="Y38H6C.14.1"/>
    <property type="gene ID" value="WBGene00012626"/>
</dbReference>
<dbReference type="GeneID" id="189695"/>
<dbReference type="KEGG" id="cel:CELE_Y38H6C.14"/>
<dbReference type="UCSC" id="Y38H6C.14">
    <property type="organism name" value="c. elegans"/>
</dbReference>
<dbReference type="AGR" id="WB:WBGene00012626"/>
<dbReference type="CTD" id="189695"/>
<dbReference type="WormBase" id="Y38H6C.14">
    <property type="protein sequence ID" value="CE19108"/>
    <property type="gene ID" value="WBGene00012626"/>
    <property type="gene designation" value="famh-161"/>
</dbReference>
<dbReference type="eggNOG" id="ENOG502SE3D">
    <property type="taxonomic scope" value="Eukaryota"/>
</dbReference>
<dbReference type="GeneTree" id="ENSGT00940000174752"/>
<dbReference type="HOGENOM" id="CLU_334077_0_0_1"/>
<dbReference type="InParanoid" id="Q9XX47"/>
<dbReference type="OMA" id="GIKSHRA"/>
<dbReference type="OrthoDB" id="2150121at2759"/>
<dbReference type="PRO" id="PR:Q9XX47"/>
<dbReference type="Proteomes" id="UP000001940">
    <property type="component" value="Chromosome V"/>
</dbReference>
<dbReference type="Bgee" id="WBGene00012626">
    <property type="expression patterns" value="Expressed in pharyngeal muscle cell (C elegans) and 3 other cell types or tissues"/>
</dbReference>
<dbReference type="GO" id="GO:0005930">
    <property type="term" value="C:axoneme"/>
    <property type="evidence" value="ECO:0000314"/>
    <property type="project" value="UniProtKB"/>
</dbReference>
<dbReference type="GO" id="GO:0097546">
    <property type="term" value="C:ciliary base"/>
    <property type="evidence" value="ECO:0000314"/>
    <property type="project" value="UniProtKB"/>
</dbReference>
<dbReference type="GO" id="GO:0035869">
    <property type="term" value="C:ciliary transition zone"/>
    <property type="evidence" value="ECO:0000314"/>
    <property type="project" value="UniProtKB"/>
</dbReference>
<dbReference type="GO" id="GO:0044782">
    <property type="term" value="P:cilium organization"/>
    <property type="evidence" value="ECO:0000318"/>
    <property type="project" value="GO_Central"/>
</dbReference>
<dbReference type="InterPro" id="IPR051655">
    <property type="entry name" value="FAM161"/>
</dbReference>
<dbReference type="PANTHER" id="PTHR21501">
    <property type="entry name" value="PROTEIN FAM-161"/>
    <property type="match status" value="1"/>
</dbReference>
<dbReference type="PANTHER" id="PTHR21501:SF1">
    <property type="entry name" value="PROTEIN FAM-161"/>
    <property type="match status" value="1"/>
</dbReference>
<reference evidence="6" key="1">
    <citation type="journal article" date="1998" name="Science">
        <title>Genome sequence of the nematode C. elegans: a platform for investigating biology.</title>
        <authorList>
            <consortium name="The C. elegans sequencing consortium"/>
        </authorList>
    </citation>
    <scope>NUCLEOTIDE SEQUENCE [LARGE SCALE GENOMIC DNA]</scope>
    <source>
        <strain evidence="6">Bristol N2</strain>
    </source>
</reference>
<reference evidence="5" key="2">
    <citation type="journal article" date="2016" name="PLoS Genet.">
        <title>Whole-organism developmental expression profiling identifies rab-28 as a novel ciliary GTPase associated with the BBSome and intraflagellar transport.</title>
        <authorList>
            <person name="Jensen V.L."/>
            <person name="Carter S."/>
            <person name="Sanders A.A."/>
            <person name="Li C."/>
            <person name="Kennedy J."/>
            <person name="Timbers T.A."/>
            <person name="Cai J."/>
            <person name="Scheidel N."/>
            <person name="Kennedy B.N."/>
            <person name="Morin R.D."/>
            <person name="Leroux M.R."/>
            <person name="Blacque O.E."/>
        </authorList>
    </citation>
    <scope>SUBCELLULAR LOCATION</scope>
    <scope>TISSUE SPECIFICITY</scope>
</reference>
<proteinExistence type="evidence at protein level"/>
<sequence length="814" mass="90729">MAPPKDPPVLRNLQATADLLDALQNDPSLLNDEEFIKRLSILRQKHEETTNFLAKKLGAPPLPTMMTSSEITQHRSSYKVTKSSSCHFQDEASPSDYQMPRHLDLKPRSSEVRVPVRAAPEPPREQSWSQTEYATLAHNQSHEALYEDPRHQVHATSSHQNPRHQSSRHHNIESTAPSQVSVTSSVQSVAALSGQNPRQQVHATPSHQIPRHQSSRTHQNSRQQVPSATSSTLQNPRHRTSSASRHHSTRNATSATVRQILANASTRHLSSAPHIATSVAMPSGLLLSSSNTKHVASSKSENPQFATSSHVVEESFLEDGMSTTREVPTIRDEVVAGDLKLSKNRSKSMHQLSKYTPQVTVPKPFQLSLRKSTGNTYAKKFMSGLITEKQKLEEDAKKALENTKFRAKPVPKSTYQPTNTFATEQKYVEAMRKKVAAKARRKFEVQNEMVRSKSEGNLASIKPLGYVPPSTYISPIPVKPNARSRSATMRATILIQEATTPKGIKSHRAQSNLTHHLRHGRCTMDASAVSLHRRTSPPDFEKIHAKITDNFRNTNSKPSTVPIPFKFASRSKSATSRHGNCQEQAPKPFKKSTENLPKTSKNRVPSTHATQLREELNRAKIELKKSEKSGKNGNFWAEDNKQRISSFLGARSKTEEDIAMRTKQKLQQQQETTQEYMRQLAEMKQRVLNGPLIMEKQTALAQEHRLKRKFEERMKSAKGRGIERVQSQEKQQSIGRRSSEVSGSGTFVVDKGYEESFESEDKSEKSGSSTPSESGSGSESENESRSSRSSKPKSSKSTSSKSSSSRSTSSSSEA</sequence>
<evidence type="ECO:0000255" key="1"/>
<evidence type="ECO:0000256" key="2">
    <source>
        <dbReference type="SAM" id="MobiDB-lite"/>
    </source>
</evidence>
<evidence type="ECO:0000269" key="3">
    <source>
    </source>
</evidence>
<evidence type="ECO:0000303" key="4">
    <source>
    </source>
</evidence>
<evidence type="ECO:0000305" key="5"/>
<evidence type="ECO:0000312" key="6">
    <source>
        <dbReference type="Proteomes" id="UP000001940"/>
    </source>
</evidence>
<evidence type="ECO:0000312" key="7">
    <source>
        <dbReference type="WormBase" id="Y38H6C.14"/>
    </source>
</evidence>
<protein>
    <recommendedName>
        <fullName evidence="5">Protein fam-161</fullName>
    </recommendedName>
</protein>
<organism evidence="6">
    <name type="scientific">Caenorhabditis elegans</name>
    <dbReference type="NCBI Taxonomy" id="6239"/>
    <lineage>
        <taxon>Eukaryota</taxon>
        <taxon>Metazoa</taxon>
        <taxon>Ecdysozoa</taxon>
        <taxon>Nematoda</taxon>
        <taxon>Chromadorea</taxon>
        <taxon>Rhabditida</taxon>
        <taxon>Rhabditina</taxon>
        <taxon>Rhabditomorpha</taxon>
        <taxon>Rhabditoidea</taxon>
        <taxon>Rhabditidae</taxon>
        <taxon>Peloderinae</taxon>
        <taxon>Caenorhabditis</taxon>
    </lineage>
</organism>
<accession>Q9XX47</accession>